<organism>
    <name type="scientific">Xenopus laevis</name>
    <name type="common">African clawed frog</name>
    <dbReference type="NCBI Taxonomy" id="8355"/>
    <lineage>
        <taxon>Eukaryota</taxon>
        <taxon>Metazoa</taxon>
        <taxon>Chordata</taxon>
        <taxon>Craniata</taxon>
        <taxon>Vertebrata</taxon>
        <taxon>Euteleostomi</taxon>
        <taxon>Amphibia</taxon>
        <taxon>Batrachia</taxon>
        <taxon>Anura</taxon>
        <taxon>Pipoidea</taxon>
        <taxon>Pipidae</taxon>
        <taxon>Xenopodinae</taxon>
        <taxon>Xenopus</taxon>
        <taxon>Xenopus</taxon>
    </lineage>
</organism>
<reference key="1">
    <citation type="submission" date="2005-04" db="EMBL/GenBank/DDBJ databases">
        <authorList>
            <consortium name="NIH - Xenopus Gene Collection (XGC) project"/>
        </authorList>
    </citation>
    <scope>NUCLEOTIDE SEQUENCE [LARGE SCALE MRNA]</scope>
    <source>
        <tissue>Embryo</tissue>
    </source>
</reference>
<gene>
    <name type="primary">eif3b</name>
</gene>
<name>EIF3B_XENLA</name>
<feature type="chain" id="PRO_0000363787" description="Eukaryotic translation initiation factor 3 subunit B">
    <location>
        <begin position="1"/>
        <end position="688"/>
    </location>
</feature>
<feature type="domain" description="RRM" evidence="2">
    <location>
        <begin position="61"/>
        <end position="144"/>
    </location>
</feature>
<feature type="repeat" description="WD 1">
    <location>
        <begin position="164"/>
        <end position="206"/>
    </location>
</feature>
<feature type="repeat" description="WD 2">
    <location>
        <begin position="208"/>
        <end position="246"/>
    </location>
</feature>
<feature type="repeat" description="WD 3">
    <location>
        <begin position="248"/>
        <end position="293"/>
    </location>
</feature>
<feature type="repeat" description="WD 4">
    <location>
        <begin position="297"/>
        <end position="335"/>
    </location>
</feature>
<feature type="repeat" description="WD 5">
    <location>
        <begin position="338"/>
        <end position="373"/>
    </location>
</feature>
<feature type="repeat" description="WD 6">
    <location>
        <begin position="436"/>
        <end position="492"/>
    </location>
</feature>
<feature type="repeat" description="WD 7">
    <location>
        <begin position="525"/>
        <end position="570"/>
    </location>
</feature>
<feature type="repeat" description="WD 8">
    <location>
        <begin position="635"/>
        <end position="680"/>
    </location>
</feature>
<feature type="region of interest" description="Disordered" evidence="3">
    <location>
        <begin position="1"/>
        <end position="43"/>
    </location>
</feature>
<feature type="coiled-coil region" evidence="2">
    <location>
        <begin position="589"/>
        <end position="640"/>
    </location>
</feature>
<feature type="compositionally biased region" description="Acidic residues" evidence="3">
    <location>
        <begin position="10"/>
        <end position="26"/>
    </location>
</feature>
<feature type="compositionally biased region" description="Acidic residues" evidence="3">
    <location>
        <begin position="33"/>
        <end position="43"/>
    </location>
</feature>
<dbReference type="EMBL" id="BC092246">
    <property type="protein sequence ID" value="AAH92246.1"/>
    <property type="molecule type" value="mRNA"/>
</dbReference>
<dbReference type="SMR" id="Q569Z1"/>
<dbReference type="BioGRID" id="592856">
    <property type="interactions" value="3"/>
</dbReference>
<dbReference type="IntAct" id="Q569Z1">
    <property type="interactions" value="1"/>
</dbReference>
<dbReference type="DNASU" id="735075"/>
<dbReference type="GeneID" id="735075"/>
<dbReference type="KEGG" id="xla:735075"/>
<dbReference type="AGR" id="Xenbase:XB-GENE-963855"/>
<dbReference type="CTD" id="735075"/>
<dbReference type="Xenbase" id="XB-GENE-963855">
    <property type="gene designation" value="eif3b.L"/>
</dbReference>
<dbReference type="OrthoDB" id="10250414at2759"/>
<dbReference type="Proteomes" id="UP000186698">
    <property type="component" value="Chromosome 9_10L"/>
</dbReference>
<dbReference type="Bgee" id="735075">
    <property type="expression patterns" value="Expressed in lung and 19 other cell types or tissues"/>
</dbReference>
<dbReference type="GO" id="GO:0010494">
    <property type="term" value="C:cytoplasmic stress granule"/>
    <property type="evidence" value="ECO:0000250"/>
    <property type="project" value="UniProtKB"/>
</dbReference>
<dbReference type="GO" id="GO:0016282">
    <property type="term" value="C:eukaryotic 43S preinitiation complex"/>
    <property type="evidence" value="ECO:0007669"/>
    <property type="project" value="UniProtKB-UniRule"/>
</dbReference>
<dbReference type="GO" id="GO:0033290">
    <property type="term" value="C:eukaryotic 48S preinitiation complex"/>
    <property type="evidence" value="ECO:0007669"/>
    <property type="project" value="UniProtKB-UniRule"/>
</dbReference>
<dbReference type="GO" id="GO:0005852">
    <property type="term" value="C:eukaryotic translation initiation factor 3 complex"/>
    <property type="evidence" value="ECO:0000250"/>
    <property type="project" value="UniProtKB"/>
</dbReference>
<dbReference type="GO" id="GO:0003723">
    <property type="term" value="F:RNA binding"/>
    <property type="evidence" value="ECO:0007669"/>
    <property type="project" value="UniProtKB-UniRule"/>
</dbReference>
<dbReference type="GO" id="GO:0003743">
    <property type="term" value="F:translation initiation factor activity"/>
    <property type="evidence" value="ECO:0007669"/>
    <property type="project" value="UniProtKB-UniRule"/>
</dbReference>
<dbReference type="GO" id="GO:0031369">
    <property type="term" value="F:translation initiation factor binding"/>
    <property type="evidence" value="ECO:0007669"/>
    <property type="project" value="InterPro"/>
</dbReference>
<dbReference type="GO" id="GO:0001732">
    <property type="term" value="P:formation of cytoplasmic translation initiation complex"/>
    <property type="evidence" value="ECO:0007669"/>
    <property type="project" value="UniProtKB-UniRule"/>
</dbReference>
<dbReference type="GO" id="GO:0006446">
    <property type="term" value="P:regulation of translational initiation"/>
    <property type="evidence" value="ECO:0000250"/>
    <property type="project" value="UniProtKB"/>
</dbReference>
<dbReference type="GO" id="GO:0006413">
    <property type="term" value="P:translational initiation"/>
    <property type="evidence" value="ECO:0000250"/>
    <property type="project" value="UniProtKB"/>
</dbReference>
<dbReference type="CDD" id="cd12278">
    <property type="entry name" value="RRM_eIF3B"/>
    <property type="match status" value="1"/>
</dbReference>
<dbReference type="FunFam" id="2.130.10.10:FF:000489">
    <property type="entry name" value="Eukaryotic translation initiation factor 3 subunit B"/>
    <property type="match status" value="1"/>
</dbReference>
<dbReference type="FunFam" id="2.130.10.10:FF:001855">
    <property type="entry name" value="Eukaryotic translation initiation factor 3 subunit B"/>
    <property type="match status" value="1"/>
</dbReference>
<dbReference type="FunFam" id="3.30.70.330:FF:000164">
    <property type="entry name" value="Eukaryotic translation initiation factor 3 subunit B"/>
    <property type="match status" value="1"/>
</dbReference>
<dbReference type="Gene3D" id="3.30.70.330">
    <property type="match status" value="1"/>
</dbReference>
<dbReference type="Gene3D" id="2.130.10.10">
    <property type="entry name" value="YVTN repeat-like/Quinoprotein amine dehydrogenase"/>
    <property type="match status" value="2"/>
</dbReference>
<dbReference type="HAMAP" id="MF_03001">
    <property type="entry name" value="eIF3b"/>
    <property type="match status" value="1"/>
</dbReference>
<dbReference type="InterPro" id="IPR011400">
    <property type="entry name" value="EIF3B"/>
</dbReference>
<dbReference type="InterPro" id="IPR034363">
    <property type="entry name" value="eIF3B_RRM"/>
</dbReference>
<dbReference type="InterPro" id="IPR012677">
    <property type="entry name" value="Nucleotide-bd_a/b_plait_sf"/>
</dbReference>
<dbReference type="InterPro" id="IPR035979">
    <property type="entry name" value="RBD_domain_sf"/>
</dbReference>
<dbReference type="InterPro" id="IPR000504">
    <property type="entry name" value="RRM_dom"/>
</dbReference>
<dbReference type="InterPro" id="IPR013979">
    <property type="entry name" value="TIF_beta_prop-like"/>
</dbReference>
<dbReference type="InterPro" id="IPR015943">
    <property type="entry name" value="WD40/YVTN_repeat-like_dom_sf"/>
</dbReference>
<dbReference type="PANTHER" id="PTHR14068">
    <property type="entry name" value="EUKARYOTIC TRANSLATION INITIATION FACTOR 3 EIF3 -RELATED"/>
    <property type="match status" value="1"/>
</dbReference>
<dbReference type="PANTHER" id="PTHR14068:SF0">
    <property type="entry name" value="EUKARYOTIC TRANSLATION INITIATION FACTOR 3 SUBUNIT B"/>
    <property type="match status" value="1"/>
</dbReference>
<dbReference type="Pfam" id="PF08662">
    <property type="entry name" value="eIF2A"/>
    <property type="match status" value="1"/>
</dbReference>
<dbReference type="Pfam" id="PF00076">
    <property type="entry name" value="RRM_1"/>
    <property type="match status" value="1"/>
</dbReference>
<dbReference type="PIRSF" id="PIRSF036424">
    <property type="entry name" value="eIF3b"/>
    <property type="match status" value="1"/>
</dbReference>
<dbReference type="SMART" id="SM00360">
    <property type="entry name" value="RRM"/>
    <property type="match status" value="1"/>
</dbReference>
<dbReference type="SUPFAM" id="SSF82171">
    <property type="entry name" value="DPP6 N-terminal domain-like"/>
    <property type="match status" value="1"/>
</dbReference>
<dbReference type="SUPFAM" id="SSF54928">
    <property type="entry name" value="RNA-binding domain, RBD"/>
    <property type="match status" value="1"/>
</dbReference>
<dbReference type="PROSITE" id="PS50102">
    <property type="entry name" value="RRM"/>
    <property type="match status" value="1"/>
</dbReference>
<proteinExistence type="evidence at transcript level"/>
<protein>
    <recommendedName>
        <fullName evidence="2">Eukaryotic translation initiation factor 3 subunit B</fullName>
        <shortName evidence="2">eIF3b</shortName>
    </recommendedName>
    <alternativeName>
        <fullName evidence="2">Eukaryotic translation initiation factor 3 subunit 9</fullName>
    </alternativeName>
    <alternativeName>
        <fullName evidence="2">eIF-3-eta</fullName>
    </alternativeName>
</protein>
<evidence type="ECO:0000250" key="1">
    <source>
        <dbReference type="UniProtKB" id="P55884"/>
    </source>
</evidence>
<evidence type="ECO:0000255" key="2">
    <source>
        <dbReference type="HAMAP-Rule" id="MF_03001"/>
    </source>
</evidence>
<evidence type="ECO:0000256" key="3">
    <source>
        <dbReference type="SAM" id="MobiDB-lite"/>
    </source>
</evidence>
<comment type="function">
    <text evidence="2">RNA-binding component of the eukaryotic translation initiation factor 3 (eIF-3) complex, which is involved in protein synthesis of a specialized repertoire of mRNAs and, together with other initiation factors, stimulates binding of mRNA and methionyl-tRNAi to the 40S ribosome. The eIF-3 complex specifically targets and initiates translation of a subset of mRNAs involved in cell proliferation.</text>
</comment>
<comment type="subunit">
    <text evidence="2">Component of the eukaryotic translation initiation factor 3 (eIF-3) complex, which is composed of 13 subunits: eif3a, eif3b, eif3c, eif3d, eif3e, eif3f, eif3g, eif3h, eif3i, eif3j, eif3k, eif3l and eif3m.</text>
</comment>
<comment type="subcellular location">
    <subcellularLocation>
        <location evidence="2">Cytoplasm</location>
    </subcellularLocation>
    <subcellularLocation>
        <location evidence="1">Cytoplasm</location>
        <location evidence="1">Stress granule</location>
    </subcellularLocation>
    <text evidence="1">Localizes to stress granules following cellular stress.</text>
</comment>
<comment type="similarity">
    <text evidence="2">Belongs to the eIF-3 subunit B family.</text>
</comment>
<sequence length="688" mass="80256">MLESERPERDMEEEGEESNEEEEEEGMSFSDPEGFEDDISDEELLGDILKDRPQEADGIDSVIVVDNVPQVGPDRLEKLKNVIVKIFSKFGKLTNEFYPQAEGSTKGYIFLEYALPAQAQDAVKNADGYKLDKQHTFRVNLFTDFDKYMVIGDEWDVPEKQPFKDFGNLRSWLEDPDCRDQFSVIYESGDRTSIFWTDVKEPVPVEERARWTETYVRWSPKGTYLATFHQRGIALWGGEKFKQIQRFSHQGVQLIDFSPCERYLVTFSPLMDTKEEPQAIIIWDILTGHNKRGFHCESSAHWPIFKWSHDGKFFARMTLDTLSIYETPSMGLLDKKSLKITGIKDFSWSPGGNIIAFWVPEDKDIPARVTLMQMPTRQEIRVRNLFNVVDCKLHWQKNGDYLCVKVDRTPKGTQGMVTNFEIFRMREKQVPVDVVEMKDGIIAFAWEPNGSKFAVLHGEVPRISVSFYHVKNNGKIELIKMYDKQQANTIFWSPQGQFLVLAGLRSMNGALAFVDTSDCTIMNIAEHYTASDVEWDPTGRYVITSVSWWSHKVDNAYWMWTFQGRLLQKNNKDRFCQLLWRPRPPSLLSQDQIKQIKKDLKKYSKIFEQKDRLSQTKASKELIERRRAMMEEYKTYREMATKLYMEQKTARLEIRGGVDTDLLDSNVEDWEEETIEFFVTEEIIPVEE</sequence>
<accession>Q569Z1</accession>
<keyword id="KW-0175">Coiled coil</keyword>
<keyword id="KW-0963">Cytoplasm</keyword>
<keyword id="KW-0396">Initiation factor</keyword>
<keyword id="KW-0648">Protein biosynthesis</keyword>
<keyword id="KW-1185">Reference proteome</keyword>
<keyword id="KW-0677">Repeat</keyword>
<keyword id="KW-0694">RNA-binding</keyword>
<keyword id="KW-0853">WD repeat</keyword>